<comment type="function">
    <text evidence="1">One of the early assembly proteins it binds 23S rRNA. One of the proteins that surrounds the polypeptide exit tunnel on the outside of the ribosome. Forms the main docking site for trigger factor binding to the ribosome.</text>
</comment>
<comment type="subunit">
    <text evidence="1">Part of the 50S ribosomal subunit. Contacts protein L29, and trigger factor when it is bound to the ribosome.</text>
</comment>
<comment type="similarity">
    <text evidence="1">Belongs to the universal ribosomal protein uL23 family.</text>
</comment>
<reference key="1">
    <citation type="journal article" date="2005" name="BMC Genomics">
        <title>Bacterial genome adaptation to niches: divergence of the potential virulence genes in three Burkholderia species of different survival strategies.</title>
        <authorList>
            <person name="Kim H.S."/>
            <person name="Schell M.A."/>
            <person name="Yu Y."/>
            <person name="Ulrich R.L."/>
            <person name="Sarria S.H."/>
            <person name="Nierman W.C."/>
            <person name="DeShazer D."/>
        </authorList>
    </citation>
    <scope>NUCLEOTIDE SEQUENCE [LARGE SCALE GENOMIC DNA]</scope>
    <source>
        <strain>ATCC 700388 / DSM 13276 / CCUG 48851 / CIP 106301 / E264</strain>
    </source>
</reference>
<organism>
    <name type="scientific">Burkholderia thailandensis (strain ATCC 700388 / DSM 13276 / CCUG 48851 / CIP 106301 / E264)</name>
    <dbReference type="NCBI Taxonomy" id="271848"/>
    <lineage>
        <taxon>Bacteria</taxon>
        <taxon>Pseudomonadati</taxon>
        <taxon>Pseudomonadota</taxon>
        <taxon>Betaproteobacteria</taxon>
        <taxon>Burkholderiales</taxon>
        <taxon>Burkholderiaceae</taxon>
        <taxon>Burkholderia</taxon>
        <taxon>pseudomallei group</taxon>
    </lineage>
</organism>
<gene>
    <name evidence="1" type="primary">rplW</name>
    <name type="ordered locus">BTH_I3066</name>
</gene>
<dbReference type="EMBL" id="CP000086">
    <property type="protein sequence ID" value="ABC37880.1"/>
    <property type="molecule type" value="Genomic_DNA"/>
</dbReference>
<dbReference type="RefSeq" id="WP_004199275.1">
    <property type="nucleotide sequence ID" value="NZ_CP008786.1"/>
</dbReference>
<dbReference type="SMR" id="Q2SU29"/>
<dbReference type="GeneID" id="98107158"/>
<dbReference type="KEGG" id="bte:BTH_I3066"/>
<dbReference type="HOGENOM" id="CLU_037562_3_1_4"/>
<dbReference type="Proteomes" id="UP000001930">
    <property type="component" value="Chromosome I"/>
</dbReference>
<dbReference type="GO" id="GO:1990904">
    <property type="term" value="C:ribonucleoprotein complex"/>
    <property type="evidence" value="ECO:0007669"/>
    <property type="project" value="UniProtKB-KW"/>
</dbReference>
<dbReference type="GO" id="GO:0005840">
    <property type="term" value="C:ribosome"/>
    <property type="evidence" value="ECO:0007669"/>
    <property type="project" value="UniProtKB-KW"/>
</dbReference>
<dbReference type="GO" id="GO:0019843">
    <property type="term" value="F:rRNA binding"/>
    <property type="evidence" value="ECO:0007669"/>
    <property type="project" value="UniProtKB-UniRule"/>
</dbReference>
<dbReference type="GO" id="GO:0003735">
    <property type="term" value="F:structural constituent of ribosome"/>
    <property type="evidence" value="ECO:0007669"/>
    <property type="project" value="InterPro"/>
</dbReference>
<dbReference type="GO" id="GO:0006412">
    <property type="term" value="P:translation"/>
    <property type="evidence" value="ECO:0007669"/>
    <property type="project" value="UniProtKB-UniRule"/>
</dbReference>
<dbReference type="FunFam" id="3.30.70.330:FF:000001">
    <property type="entry name" value="50S ribosomal protein L23"/>
    <property type="match status" value="1"/>
</dbReference>
<dbReference type="Gene3D" id="3.30.70.330">
    <property type="match status" value="1"/>
</dbReference>
<dbReference type="HAMAP" id="MF_01369_B">
    <property type="entry name" value="Ribosomal_uL23_B"/>
    <property type="match status" value="1"/>
</dbReference>
<dbReference type="InterPro" id="IPR012677">
    <property type="entry name" value="Nucleotide-bd_a/b_plait_sf"/>
</dbReference>
<dbReference type="InterPro" id="IPR013025">
    <property type="entry name" value="Ribosomal_uL23-like"/>
</dbReference>
<dbReference type="InterPro" id="IPR012678">
    <property type="entry name" value="Ribosomal_uL23/eL15/eS24_sf"/>
</dbReference>
<dbReference type="NCBIfam" id="NF004359">
    <property type="entry name" value="PRK05738.1-3"/>
    <property type="match status" value="1"/>
</dbReference>
<dbReference type="NCBIfam" id="NF004363">
    <property type="entry name" value="PRK05738.2-4"/>
    <property type="match status" value="1"/>
</dbReference>
<dbReference type="PANTHER" id="PTHR11620">
    <property type="entry name" value="60S RIBOSOMAL PROTEIN L23A"/>
    <property type="match status" value="1"/>
</dbReference>
<dbReference type="Pfam" id="PF00276">
    <property type="entry name" value="Ribosomal_L23"/>
    <property type="match status" value="1"/>
</dbReference>
<dbReference type="SUPFAM" id="SSF54189">
    <property type="entry name" value="Ribosomal proteins S24e, L23 and L15e"/>
    <property type="match status" value="1"/>
</dbReference>
<feature type="chain" id="PRO_0000272725" description="Large ribosomal subunit protein uL23">
    <location>
        <begin position="1"/>
        <end position="104"/>
    </location>
</feature>
<protein>
    <recommendedName>
        <fullName evidence="1">Large ribosomal subunit protein uL23</fullName>
    </recommendedName>
    <alternativeName>
        <fullName evidence="2">50S ribosomal protein L23</fullName>
    </alternativeName>
</protein>
<name>RL23_BURTA</name>
<evidence type="ECO:0000255" key="1">
    <source>
        <dbReference type="HAMAP-Rule" id="MF_01369"/>
    </source>
</evidence>
<evidence type="ECO:0000305" key="2"/>
<keyword id="KW-0687">Ribonucleoprotein</keyword>
<keyword id="KW-0689">Ribosomal protein</keyword>
<keyword id="KW-0694">RNA-binding</keyword>
<keyword id="KW-0699">rRNA-binding</keyword>
<accession>Q2SU29</accession>
<proteinExistence type="inferred from homology"/>
<sequence length="104" mass="11740">MSEIRKNDHRLMQVLLAPVISEKATLVADKNEQVVFEVAPDATKQEVKAAVELLFKVEVDSVNVLVQKGKQKRFGRSMGRRKDVKKAYVCLKPGQEINFEAEAK</sequence>